<gene>
    <name type="primary">MAP70.4</name>
    <name type="ordered locus">Os03g0215700</name>
    <name type="ordered locus">LOC_Os03g11650</name>
    <name type="ORF">OsJ_09915</name>
</gene>
<dbReference type="EMBL" id="DP000009">
    <property type="protein sequence ID" value="ABF94640.1"/>
    <property type="molecule type" value="Genomic_DNA"/>
</dbReference>
<dbReference type="EMBL" id="AP008209">
    <property type="protein sequence ID" value="BAF11292.1"/>
    <property type="molecule type" value="Genomic_DNA"/>
</dbReference>
<dbReference type="EMBL" id="AP014959">
    <property type="protein sequence ID" value="BAS82965.1"/>
    <property type="molecule type" value="Genomic_DNA"/>
</dbReference>
<dbReference type="EMBL" id="CM000140">
    <property type="protein sequence ID" value="EEE58588.1"/>
    <property type="molecule type" value="Genomic_DNA"/>
</dbReference>
<dbReference type="EMBL" id="AK099772">
    <property type="protein sequence ID" value="BAG94287.1"/>
    <property type="molecule type" value="mRNA"/>
</dbReference>
<dbReference type="RefSeq" id="XP_015631291.1">
    <property type="nucleotide sequence ID" value="XM_015775805.1"/>
</dbReference>
<dbReference type="RefSeq" id="XP_015631292.1">
    <property type="nucleotide sequence ID" value="XM_015775806.1"/>
</dbReference>
<dbReference type="SMR" id="Q10PZ6"/>
<dbReference type="FunCoup" id="Q10PZ6">
    <property type="interactions" value="314"/>
</dbReference>
<dbReference type="STRING" id="39947.Q10PZ6"/>
<dbReference type="PaxDb" id="39947-Q10PZ6"/>
<dbReference type="EnsemblPlants" id="Os03t0215700-01">
    <property type="protein sequence ID" value="Os03t0215700-01"/>
    <property type="gene ID" value="Os03g0215700"/>
</dbReference>
<dbReference type="GeneID" id="4332061"/>
<dbReference type="Gramene" id="Os03t0215700-01">
    <property type="protein sequence ID" value="Os03t0215700-01"/>
    <property type="gene ID" value="Os03g0215700"/>
</dbReference>
<dbReference type="KEGG" id="dosa:Os03g0215700"/>
<dbReference type="KEGG" id="osa:4332061"/>
<dbReference type="eggNOG" id="ENOG502QS8R">
    <property type="taxonomic scope" value="Eukaryota"/>
</dbReference>
<dbReference type="HOGENOM" id="CLU_023069_0_0_1"/>
<dbReference type="InParanoid" id="Q10PZ6"/>
<dbReference type="OMA" id="MLPFDGH"/>
<dbReference type="OrthoDB" id="1906253at2759"/>
<dbReference type="Proteomes" id="UP000000763">
    <property type="component" value="Chromosome 3"/>
</dbReference>
<dbReference type="Proteomes" id="UP000007752">
    <property type="component" value="Chromosome 3"/>
</dbReference>
<dbReference type="Proteomes" id="UP000059680">
    <property type="component" value="Chromosome 3"/>
</dbReference>
<dbReference type="GO" id="GO:0005737">
    <property type="term" value="C:cytoplasm"/>
    <property type="evidence" value="ECO:0007669"/>
    <property type="project" value="UniProtKB-KW"/>
</dbReference>
<dbReference type="GO" id="GO:0005874">
    <property type="term" value="C:microtubule"/>
    <property type="evidence" value="ECO:0007669"/>
    <property type="project" value="UniProtKB-KW"/>
</dbReference>
<dbReference type="GO" id="GO:0008017">
    <property type="term" value="F:microtubule binding"/>
    <property type="evidence" value="ECO:0007669"/>
    <property type="project" value="InterPro"/>
</dbReference>
<dbReference type="GO" id="GO:0007010">
    <property type="term" value="P:cytoskeleton organization"/>
    <property type="evidence" value="ECO:0007669"/>
    <property type="project" value="InterPro"/>
</dbReference>
<dbReference type="InterPro" id="IPR009768">
    <property type="entry name" value="MAP70"/>
</dbReference>
<dbReference type="PANTHER" id="PTHR31246">
    <property type="entry name" value="MICROTUBULE-ASSOCIATED PROTEIN 70-2"/>
    <property type="match status" value="1"/>
</dbReference>
<dbReference type="PANTHER" id="PTHR31246:SF5">
    <property type="entry name" value="MICROTUBULE-ASSOCIATED PROTEIN 70-5"/>
    <property type="match status" value="1"/>
</dbReference>
<dbReference type="Pfam" id="PF07058">
    <property type="entry name" value="MAP70"/>
    <property type="match status" value="1"/>
</dbReference>
<accession>Q10PZ6</accession>
<accession>A0A0P0VUR9</accession>
<evidence type="ECO:0000250" key="1"/>
<evidence type="ECO:0000255" key="2"/>
<evidence type="ECO:0000256" key="3">
    <source>
        <dbReference type="SAM" id="MobiDB-lite"/>
    </source>
</evidence>
<evidence type="ECO:0000305" key="4"/>
<comment type="function">
    <text evidence="1">Plant-specific protein that interact with microtubules.</text>
</comment>
<comment type="subcellular location">
    <subcellularLocation>
        <location evidence="1">Cytoplasm</location>
        <location evidence="1">Cytoskeleton</location>
    </subcellularLocation>
    <text>Associated to microtubules.</text>
</comment>
<comment type="similarity">
    <text evidence="4">Belongs to the MAP70 family.</text>
</comment>
<sequence length="515" mass="57914">MGSLGEVVEHGVSKDMLPFDGHPDPVVDELNRLENLLREKDRELGHAYSEIKGLKVTEALKDKAIAELTKELKKQDEKLSSLEKQLEQKNLDVKRLSNERKEALSAQFAAEATLRRIHSSQKDEEVVPFDAIIAPLESDIKAYRHEIALLQDDKKALERHLKLKEAALVEAGNILRSALERALIVEDVQNQNIELKKQMEIYHEENKLLEKSNRQQVLDIERLTHTIAELEESILSTGDVANAVRFYQNQAAKLNEEKRTLERELARAKVYVNRVASTTANEWKDDADKLMPVKRWLEERRLLQGEIQRLRDKIAMAEKSAKAEAQLNDKLRRKLKALEDDMRNESSNTSASNKDNATSKQATPKRSSSQPRRPIISADGADKRRPASQPRASVSGKVLNKQPGSETEAAEKNRHAAAKRFDSPRSAKSVAAGGRGERPVRSHLWAHRSKVADDAGKENKEQNPNYKAHLGDSHADGDCGVQCSEHEEAMDLRKLDEGKADDSDAVKSTKDSCEI</sequence>
<protein>
    <recommendedName>
        <fullName>Microtubule-associated protein 70-4</fullName>
        <shortName>AtMAP70-4</shortName>
    </recommendedName>
    <alternativeName>
        <fullName>70 kDa microtubule-associated protein 4</fullName>
    </alternativeName>
</protein>
<proteinExistence type="evidence at transcript level"/>
<feature type="chain" id="PRO_0000409465" description="Microtubule-associated protein 70-4">
    <location>
        <begin position="1"/>
        <end position="515"/>
    </location>
</feature>
<feature type="region of interest" description="Required for targeting to microtubules" evidence="1">
    <location>
        <begin position="208"/>
        <end position="410"/>
    </location>
</feature>
<feature type="region of interest" description="Disordered" evidence="3">
    <location>
        <begin position="340"/>
        <end position="515"/>
    </location>
</feature>
<feature type="coiled-coil region" evidence="2">
    <location>
        <begin position="26"/>
        <end position="106"/>
    </location>
</feature>
<feature type="coiled-coil region" evidence="2">
    <location>
        <begin position="136"/>
        <end position="351"/>
    </location>
</feature>
<feature type="compositionally biased region" description="Polar residues" evidence="3">
    <location>
        <begin position="345"/>
        <end position="362"/>
    </location>
</feature>
<feature type="compositionally biased region" description="Low complexity" evidence="3">
    <location>
        <begin position="364"/>
        <end position="374"/>
    </location>
</feature>
<feature type="compositionally biased region" description="Basic and acidic residues" evidence="3">
    <location>
        <begin position="409"/>
        <end position="425"/>
    </location>
</feature>
<feature type="compositionally biased region" description="Basic and acidic residues" evidence="3">
    <location>
        <begin position="450"/>
        <end position="461"/>
    </location>
</feature>
<feature type="compositionally biased region" description="Basic and acidic residues" evidence="3">
    <location>
        <begin position="484"/>
        <end position="515"/>
    </location>
</feature>
<keyword id="KW-0175">Coiled coil</keyword>
<keyword id="KW-0963">Cytoplasm</keyword>
<keyword id="KW-0206">Cytoskeleton</keyword>
<keyword id="KW-0493">Microtubule</keyword>
<keyword id="KW-1185">Reference proteome</keyword>
<reference key="1">
    <citation type="journal article" date="2005" name="Genome Res.">
        <title>Sequence, annotation, and analysis of synteny between rice chromosome 3 and diverged grass species.</title>
        <authorList>
            <consortium name="The rice chromosome 3 sequencing consortium"/>
            <person name="Buell C.R."/>
            <person name="Yuan Q."/>
            <person name="Ouyang S."/>
            <person name="Liu J."/>
            <person name="Zhu W."/>
            <person name="Wang A."/>
            <person name="Maiti R."/>
            <person name="Haas B."/>
            <person name="Wortman J."/>
            <person name="Pertea M."/>
            <person name="Jones K.M."/>
            <person name="Kim M."/>
            <person name="Overton L."/>
            <person name="Tsitrin T."/>
            <person name="Fadrosh D."/>
            <person name="Bera J."/>
            <person name="Weaver B."/>
            <person name="Jin S."/>
            <person name="Johri S."/>
            <person name="Reardon M."/>
            <person name="Webb K."/>
            <person name="Hill J."/>
            <person name="Moffat K."/>
            <person name="Tallon L."/>
            <person name="Van Aken S."/>
            <person name="Lewis M."/>
            <person name="Utterback T."/>
            <person name="Feldblyum T."/>
            <person name="Zismann V."/>
            <person name="Iobst S."/>
            <person name="Hsiao J."/>
            <person name="de Vazeille A.R."/>
            <person name="Salzberg S.L."/>
            <person name="White O."/>
            <person name="Fraser C.M."/>
            <person name="Yu Y."/>
            <person name="Kim H."/>
            <person name="Rambo T."/>
            <person name="Currie J."/>
            <person name="Collura K."/>
            <person name="Kernodle-Thompson S."/>
            <person name="Wei F."/>
            <person name="Kudrna K."/>
            <person name="Ammiraju J.S.S."/>
            <person name="Luo M."/>
            <person name="Goicoechea J.L."/>
            <person name="Wing R.A."/>
            <person name="Henry D."/>
            <person name="Oates R."/>
            <person name="Palmer M."/>
            <person name="Pries G."/>
            <person name="Saski C."/>
            <person name="Simmons J."/>
            <person name="Soderlund C."/>
            <person name="Nelson W."/>
            <person name="de la Bastide M."/>
            <person name="Spiegel L."/>
            <person name="Nascimento L."/>
            <person name="Huang E."/>
            <person name="Preston R."/>
            <person name="Zutavern T."/>
            <person name="Palmer L."/>
            <person name="O'Shaughnessy A."/>
            <person name="Dike S."/>
            <person name="McCombie W.R."/>
            <person name="Minx P."/>
            <person name="Cordum H."/>
            <person name="Wilson R."/>
            <person name="Jin W."/>
            <person name="Lee H.R."/>
            <person name="Jiang J."/>
            <person name="Jackson S."/>
        </authorList>
    </citation>
    <scope>NUCLEOTIDE SEQUENCE [LARGE SCALE GENOMIC DNA]</scope>
    <source>
        <strain>cv. Nipponbare</strain>
    </source>
</reference>
<reference key="2">
    <citation type="journal article" date="2005" name="Nature">
        <title>The map-based sequence of the rice genome.</title>
        <authorList>
            <consortium name="International rice genome sequencing project (IRGSP)"/>
        </authorList>
    </citation>
    <scope>NUCLEOTIDE SEQUENCE [LARGE SCALE GENOMIC DNA]</scope>
    <source>
        <strain>cv. Nipponbare</strain>
    </source>
</reference>
<reference key="3">
    <citation type="journal article" date="2008" name="Nucleic Acids Res.">
        <title>The rice annotation project database (RAP-DB): 2008 update.</title>
        <authorList>
            <consortium name="The rice annotation project (RAP)"/>
        </authorList>
    </citation>
    <scope>GENOME REANNOTATION</scope>
    <source>
        <strain>cv. Nipponbare</strain>
    </source>
</reference>
<reference key="4">
    <citation type="journal article" date="2013" name="Rice">
        <title>Improvement of the Oryza sativa Nipponbare reference genome using next generation sequence and optical map data.</title>
        <authorList>
            <person name="Kawahara Y."/>
            <person name="de la Bastide M."/>
            <person name="Hamilton J.P."/>
            <person name="Kanamori H."/>
            <person name="McCombie W.R."/>
            <person name="Ouyang S."/>
            <person name="Schwartz D.C."/>
            <person name="Tanaka T."/>
            <person name="Wu J."/>
            <person name="Zhou S."/>
            <person name="Childs K.L."/>
            <person name="Davidson R.M."/>
            <person name="Lin H."/>
            <person name="Quesada-Ocampo L."/>
            <person name="Vaillancourt B."/>
            <person name="Sakai H."/>
            <person name="Lee S.S."/>
            <person name="Kim J."/>
            <person name="Numa H."/>
            <person name="Itoh T."/>
            <person name="Buell C.R."/>
            <person name="Matsumoto T."/>
        </authorList>
    </citation>
    <scope>GENOME REANNOTATION</scope>
    <source>
        <strain>cv. Nipponbare</strain>
    </source>
</reference>
<reference key="5">
    <citation type="journal article" date="2005" name="PLoS Biol.">
        <title>The genomes of Oryza sativa: a history of duplications.</title>
        <authorList>
            <person name="Yu J."/>
            <person name="Wang J."/>
            <person name="Lin W."/>
            <person name="Li S."/>
            <person name="Li H."/>
            <person name="Zhou J."/>
            <person name="Ni P."/>
            <person name="Dong W."/>
            <person name="Hu S."/>
            <person name="Zeng C."/>
            <person name="Zhang J."/>
            <person name="Zhang Y."/>
            <person name="Li R."/>
            <person name="Xu Z."/>
            <person name="Li S."/>
            <person name="Li X."/>
            <person name="Zheng H."/>
            <person name="Cong L."/>
            <person name="Lin L."/>
            <person name="Yin J."/>
            <person name="Geng J."/>
            <person name="Li G."/>
            <person name="Shi J."/>
            <person name="Liu J."/>
            <person name="Lv H."/>
            <person name="Li J."/>
            <person name="Wang J."/>
            <person name="Deng Y."/>
            <person name="Ran L."/>
            <person name="Shi X."/>
            <person name="Wang X."/>
            <person name="Wu Q."/>
            <person name="Li C."/>
            <person name="Ren X."/>
            <person name="Wang J."/>
            <person name="Wang X."/>
            <person name="Li D."/>
            <person name="Liu D."/>
            <person name="Zhang X."/>
            <person name="Ji Z."/>
            <person name="Zhao W."/>
            <person name="Sun Y."/>
            <person name="Zhang Z."/>
            <person name="Bao J."/>
            <person name="Han Y."/>
            <person name="Dong L."/>
            <person name="Ji J."/>
            <person name="Chen P."/>
            <person name="Wu S."/>
            <person name="Liu J."/>
            <person name="Xiao Y."/>
            <person name="Bu D."/>
            <person name="Tan J."/>
            <person name="Yang L."/>
            <person name="Ye C."/>
            <person name="Zhang J."/>
            <person name="Xu J."/>
            <person name="Zhou Y."/>
            <person name="Yu Y."/>
            <person name="Zhang B."/>
            <person name="Zhuang S."/>
            <person name="Wei H."/>
            <person name="Liu B."/>
            <person name="Lei M."/>
            <person name="Yu H."/>
            <person name="Li Y."/>
            <person name="Xu H."/>
            <person name="Wei S."/>
            <person name="He X."/>
            <person name="Fang L."/>
            <person name="Zhang Z."/>
            <person name="Zhang Y."/>
            <person name="Huang X."/>
            <person name="Su Z."/>
            <person name="Tong W."/>
            <person name="Li J."/>
            <person name="Tong Z."/>
            <person name="Li S."/>
            <person name="Ye J."/>
            <person name="Wang L."/>
            <person name="Fang L."/>
            <person name="Lei T."/>
            <person name="Chen C.-S."/>
            <person name="Chen H.-C."/>
            <person name="Xu Z."/>
            <person name="Li H."/>
            <person name="Huang H."/>
            <person name="Zhang F."/>
            <person name="Xu H."/>
            <person name="Li N."/>
            <person name="Zhao C."/>
            <person name="Li S."/>
            <person name="Dong L."/>
            <person name="Huang Y."/>
            <person name="Li L."/>
            <person name="Xi Y."/>
            <person name="Qi Q."/>
            <person name="Li W."/>
            <person name="Zhang B."/>
            <person name="Hu W."/>
            <person name="Zhang Y."/>
            <person name="Tian X."/>
            <person name="Jiao Y."/>
            <person name="Liang X."/>
            <person name="Jin J."/>
            <person name="Gao L."/>
            <person name="Zheng W."/>
            <person name="Hao B."/>
            <person name="Liu S.-M."/>
            <person name="Wang W."/>
            <person name="Yuan L."/>
            <person name="Cao M."/>
            <person name="McDermott J."/>
            <person name="Samudrala R."/>
            <person name="Wang J."/>
            <person name="Wong G.K.-S."/>
            <person name="Yang H."/>
        </authorList>
    </citation>
    <scope>NUCLEOTIDE SEQUENCE [LARGE SCALE GENOMIC DNA]</scope>
    <source>
        <strain>cv. Nipponbare</strain>
    </source>
</reference>
<reference key="6">
    <citation type="journal article" date="2003" name="Science">
        <title>Collection, mapping, and annotation of over 28,000 cDNA clones from japonica rice.</title>
        <authorList>
            <consortium name="The rice full-length cDNA consortium"/>
        </authorList>
    </citation>
    <scope>NUCLEOTIDE SEQUENCE [LARGE SCALE MRNA]</scope>
    <source>
        <strain>cv. Nipponbare</strain>
    </source>
</reference>
<organism>
    <name type="scientific">Oryza sativa subsp. japonica</name>
    <name type="common">Rice</name>
    <dbReference type="NCBI Taxonomy" id="39947"/>
    <lineage>
        <taxon>Eukaryota</taxon>
        <taxon>Viridiplantae</taxon>
        <taxon>Streptophyta</taxon>
        <taxon>Embryophyta</taxon>
        <taxon>Tracheophyta</taxon>
        <taxon>Spermatophyta</taxon>
        <taxon>Magnoliopsida</taxon>
        <taxon>Liliopsida</taxon>
        <taxon>Poales</taxon>
        <taxon>Poaceae</taxon>
        <taxon>BOP clade</taxon>
        <taxon>Oryzoideae</taxon>
        <taxon>Oryzeae</taxon>
        <taxon>Oryzinae</taxon>
        <taxon>Oryza</taxon>
        <taxon>Oryza sativa</taxon>
    </lineage>
</organism>
<name>MP704_ORYSJ</name>